<accession>O26284</accession>
<protein>
    <recommendedName>
        <fullName evidence="1">Glutamate N-acetyltransferase</fullName>
        <ecNumber evidence="1">2.3.1.35</ecNumber>
    </recommendedName>
    <alternativeName>
        <fullName evidence="1">Ornithine acetyltransferase</fullName>
        <shortName evidence="1">OATase</shortName>
    </alternativeName>
    <alternativeName>
        <fullName evidence="1">Ornithine transacetylase</fullName>
    </alternativeName>
    <component>
        <recommendedName>
            <fullName evidence="1">Glutamate N-acetyltransferase alpha chain</fullName>
        </recommendedName>
    </component>
    <component>
        <recommendedName>
            <fullName evidence="1">Glutamate N-acetyltransferase beta chain</fullName>
        </recommendedName>
    </component>
</protein>
<name>ARGJ_METTH</name>
<dbReference type="EC" id="2.3.1.35" evidence="1"/>
<dbReference type="EMBL" id="AE000666">
    <property type="protein sequence ID" value="AAB84688.1"/>
    <property type="molecule type" value="Genomic_DNA"/>
</dbReference>
<dbReference type="PIR" id="C69110">
    <property type="entry name" value="C69110"/>
</dbReference>
<dbReference type="SMR" id="O26284"/>
<dbReference type="FunCoup" id="O26284">
    <property type="interactions" value="171"/>
</dbReference>
<dbReference type="STRING" id="187420.MTH_182"/>
<dbReference type="MEROPS" id="T05.002"/>
<dbReference type="PaxDb" id="187420-MTH_182"/>
<dbReference type="EnsemblBacteria" id="AAB84688">
    <property type="protein sequence ID" value="AAB84688"/>
    <property type="gene ID" value="MTH_182"/>
</dbReference>
<dbReference type="KEGG" id="mth:MTH_182"/>
<dbReference type="PATRIC" id="fig|187420.15.peg.155"/>
<dbReference type="HOGENOM" id="CLU_027172_1_0_2"/>
<dbReference type="InParanoid" id="O26284"/>
<dbReference type="UniPathway" id="UPA00068">
    <property type="reaction ID" value="UER00111"/>
</dbReference>
<dbReference type="Proteomes" id="UP000005223">
    <property type="component" value="Chromosome"/>
</dbReference>
<dbReference type="GO" id="GO:0005737">
    <property type="term" value="C:cytoplasm"/>
    <property type="evidence" value="ECO:0007669"/>
    <property type="project" value="UniProtKB-SubCell"/>
</dbReference>
<dbReference type="GO" id="GO:0004358">
    <property type="term" value="F:glutamate N-acetyltransferase activity"/>
    <property type="evidence" value="ECO:0007669"/>
    <property type="project" value="UniProtKB-UniRule"/>
</dbReference>
<dbReference type="GO" id="GO:0004042">
    <property type="term" value="F:L-glutamate N-acetyltransferase activity"/>
    <property type="evidence" value="ECO:0007669"/>
    <property type="project" value="UniProtKB-UniRule"/>
</dbReference>
<dbReference type="GO" id="GO:0006526">
    <property type="term" value="P:L-arginine biosynthetic process"/>
    <property type="evidence" value="ECO:0007669"/>
    <property type="project" value="UniProtKB-UniRule"/>
</dbReference>
<dbReference type="GO" id="GO:0006592">
    <property type="term" value="P:ornithine biosynthetic process"/>
    <property type="evidence" value="ECO:0007669"/>
    <property type="project" value="TreeGrafter"/>
</dbReference>
<dbReference type="CDD" id="cd02152">
    <property type="entry name" value="OAT"/>
    <property type="match status" value="1"/>
</dbReference>
<dbReference type="FunFam" id="3.10.20.340:FF:000001">
    <property type="entry name" value="Arginine biosynthesis bifunctional protein ArgJ, chloroplastic"/>
    <property type="match status" value="1"/>
</dbReference>
<dbReference type="Gene3D" id="3.10.20.340">
    <property type="entry name" value="ArgJ beta chain, C-terminal domain"/>
    <property type="match status" value="1"/>
</dbReference>
<dbReference type="Gene3D" id="3.60.70.12">
    <property type="entry name" value="L-amino peptidase D-ALA esterase/amidase"/>
    <property type="match status" value="1"/>
</dbReference>
<dbReference type="HAMAP" id="MF_01106">
    <property type="entry name" value="ArgJ"/>
    <property type="match status" value="1"/>
</dbReference>
<dbReference type="InterPro" id="IPR002813">
    <property type="entry name" value="Arg_biosynth_ArgJ"/>
</dbReference>
<dbReference type="InterPro" id="IPR016117">
    <property type="entry name" value="ArgJ-like_dom_sf"/>
</dbReference>
<dbReference type="InterPro" id="IPR042195">
    <property type="entry name" value="ArgJ_beta_C"/>
</dbReference>
<dbReference type="NCBIfam" id="TIGR00120">
    <property type="entry name" value="ArgJ"/>
    <property type="match status" value="1"/>
</dbReference>
<dbReference type="NCBIfam" id="NF003802">
    <property type="entry name" value="PRK05388.1"/>
    <property type="match status" value="1"/>
</dbReference>
<dbReference type="PANTHER" id="PTHR23100">
    <property type="entry name" value="ARGININE BIOSYNTHESIS BIFUNCTIONAL PROTEIN ARGJ"/>
    <property type="match status" value="1"/>
</dbReference>
<dbReference type="PANTHER" id="PTHR23100:SF0">
    <property type="entry name" value="ARGININE BIOSYNTHESIS BIFUNCTIONAL PROTEIN ARGJ, MITOCHONDRIAL"/>
    <property type="match status" value="1"/>
</dbReference>
<dbReference type="Pfam" id="PF01960">
    <property type="entry name" value="ArgJ"/>
    <property type="match status" value="1"/>
</dbReference>
<dbReference type="SUPFAM" id="SSF56266">
    <property type="entry name" value="DmpA/ArgJ-like"/>
    <property type="match status" value="1"/>
</dbReference>
<sequence length="402" mass="42650">MYTMELRFIRGGVCAVDGVLAAGCREGKYGVGLIINRGSTAAAVFTSNRVRAEPVKLTERVIADGSISAIVANSGNANCFTGREGMDDARRMARKVAESLSMDESEVAVASTGVIGRRMPIDKIEFLIQSAAAQLENSEAASGALAEAIMTTDTFPKEVAVEFELETGEKARIGAVAKGSGMIAPNMATMLSFITTDVDASSSELTEALRVAVDESFNMLIVDGDESTNDMVIISSTRTSGRIDSNFREALVAVCRELARMMARDGEGVTKSFQVDVVNAGTHEDAKMAARAIAGSSLVKTAIFGADPNWGRIVAAAGYSGAEFDPEEISVTLESDSESVVIVDHGDILAFEGTEELETAERVMTSKEIRIIVDLAAGDESATAYGCDLTYDYVRINAEYTT</sequence>
<proteinExistence type="inferred from homology"/>
<organism>
    <name type="scientific">Methanothermobacter thermautotrophicus (strain ATCC 29096 / DSM 1053 / JCM 10044 / NBRC 100330 / Delta H)</name>
    <name type="common">Methanobacterium thermoautotrophicum</name>
    <dbReference type="NCBI Taxonomy" id="187420"/>
    <lineage>
        <taxon>Archaea</taxon>
        <taxon>Methanobacteriati</taxon>
        <taxon>Methanobacteriota</taxon>
        <taxon>Methanomada group</taxon>
        <taxon>Methanobacteria</taxon>
        <taxon>Methanobacteriales</taxon>
        <taxon>Methanobacteriaceae</taxon>
        <taxon>Methanothermobacter</taxon>
    </lineage>
</organism>
<gene>
    <name evidence="1" type="primary">argJ</name>
    <name type="ordered locus">MTH_182</name>
</gene>
<reference key="1">
    <citation type="journal article" date="1997" name="J. Bacteriol.">
        <title>Complete genome sequence of Methanobacterium thermoautotrophicum deltaH: functional analysis and comparative genomics.</title>
        <authorList>
            <person name="Smith D.R."/>
            <person name="Doucette-Stamm L.A."/>
            <person name="Deloughery C."/>
            <person name="Lee H.-M."/>
            <person name="Dubois J."/>
            <person name="Aldredge T."/>
            <person name="Bashirzadeh R."/>
            <person name="Blakely D."/>
            <person name="Cook R."/>
            <person name="Gilbert K."/>
            <person name="Harrison D."/>
            <person name="Hoang L."/>
            <person name="Keagle P."/>
            <person name="Lumm W."/>
            <person name="Pothier B."/>
            <person name="Qiu D."/>
            <person name="Spadafora R."/>
            <person name="Vicare R."/>
            <person name="Wang Y."/>
            <person name="Wierzbowski J."/>
            <person name="Gibson R."/>
            <person name="Jiwani N."/>
            <person name="Caruso A."/>
            <person name="Bush D."/>
            <person name="Safer H."/>
            <person name="Patwell D."/>
            <person name="Prabhakar S."/>
            <person name="McDougall S."/>
            <person name="Shimer G."/>
            <person name="Goyal A."/>
            <person name="Pietrovski S."/>
            <person name="Church G.M."/>
            <person name="Daniels C.J."/>
            <person name="Mao J.-I."/>
            <person name="Rice P."/>
            <person name="Noelling J."/>
            <person name="Reeve J.N."/>
        </authorList>
    </citation>
    <scope>NUCLEOTIDE SEQUENCE [LARGE SCALE GENOMIC DNA]</scope>
    <source>
        <strain>ATCC 29096 / DSM 1053 / JCM 10044 / NBRC 100330 / Delta H</strain>
    </source>
</reference>
<keyword id="KW-0012">Acyltransferase</keyword>
<keyword id="KW-0028">Amino-acid biosynthesis</keyword>
<keyword id="KW-0055">Arginine biosynthesis</keyword>
<keyword id="KW-0068">Autocatalytic cleavage</keyword>
<keyword id="KW-0963">Cytoplasm</keyword>
<keyword id="KW-1185">Reference proteome</keyword>
<keyword id="KW-0808">Transferase</keyword>
<evidence type="ECO:0000255" key="1">
    <source>
        <dbReference type="HAMAP-Rule" id="MF_01106"/>
    </source>
</evidence>
<comment type="function">
    <text evidence="1">Catalyzes the transfer of the acetyl group from N(2)-acetylornithine to glutamate, forming N-acetylglutamate and L-ornithine.</text>
</comment>
<comment type="catalytic activity">
    <reaction evidence="1">
        <text>N(2)-acetyl-L-ornithine + L-glutamate = N-acetyl-L-glutamate + L-ornithine</text>
        <dbReference type="Rhea" id="RHEA:15349"/>
        <dbReference type="ChEBI" id="CHEBI:29985"/>
        <dbReference type="ChEBI" id="CHEBI:44337"/>
        <dbReference type="ChEBI" id="CHEBI:46911"/>
        <dbReference type="ChEBI" id="CHEBI:57805"/>
        <dbReference type="EC" id="2.3.1.35"/>
    </reaction>
</comment>
<comment type="pathway">
    <text evidence="1">Amino-acid biosynthesis; L-arginine biosynthesis; L-ornithine and N-acetyl-L-glutamate from L-glutamate and N(2)-acetyl-L-ornithine (cyclic): step 1/1.</text>
</comment>
<comment type="subunit">
    <text evidence="1">Heterotetramer of two alpha and two beta chains.</text>
</comment>
<comment type="subcellular location">
    <subcellularLocation>
        <location evidence="1">Cytoplasm</location>
    </subcellularLocation>
</comment>
<comment type="similarity">
    <text evidence="1">Belongs to the ArgJ family.</text>
</comment>
<feature type="chain" id="PRO_0000002281" description="Glutamate N-acetyltransferase alpha chain" evidence="1">
    <location>
        <begin position="1"/>
        <end position="188"/>
    </location>
</feature>
<feature type="chain" id="PRO_0000002282" description="Glutamate N-acetyltransferase beta chain" evidence="1">
    <location>
        <begin position="189"/>
        <end position="402"/>
    </location>
</feature>
<feature type="active site" description="Nucleophile" evidence="1">
    <location>
        <position position="189"/>
    </location>
</feature>
<feature type="binding site" evidence="1">
    <location>
        <position position="151"/>
    </location>
    <ligand>
        <name>substrate</name>
    </ligand>
</feature>
<feature type="binding site" evidence="1">
    <location>
        <position position="178"/>
    </location>
    <ligand>
        <name>substrate</name>
    </ligand>
</feature>
<feature type="binding site" evidence="1">
    <location>
        <position position="189"/>
    </location>
    <ligand>
        <name>substrate</name>
    </ligand>
</feature>
<feature type="binding site" evidence="1">
    <location>
        <position position="267"/>
    </location>
    <ligand>
        <name>substrate</name>
    </ligand>
</feature>
<feature type="binding site" evidence="1">
    <location>
        <position position="397"/>
    </location>
    <ligand>
        <name>substrate</name>
    </ligand>
</feature>
<feature type="binding site" evidence="1">
    <location>
        <position position="402"/>
    </location>
    <ligand>
        <name>substrate</name>
    </ligand>
</feature>
<feature type="site" description="Involved in the stabilization of negative charge on the oxyanion by the formation of the oxyanion hole" evidence="1">
    <location>
        <position position="112"/>
    </location>
</feature>
<feature type="site" description="Involved in the stabilization of negative charge on the oxyanion by the formation of the oxyanion hole" evidence="1">
    <location>
        <position position="113"/>
    </location>
</feature>
<feature type="site" description="Cleavage; by autolysis" evidence="1">
    <location>
        <begin position="188"/>
        <end position="189"/>
    </location>
</feature>